<evidence type="ECO:0000255" key="1">
    <source>
        <dbReference type="HAMAP-Rule" id="MF_00031"/>
    </source>
</evidence>
<reference key="1">
    <citation type="journal article" date="2011" name="MBio">
        <title>Novel metabolic attributes of the genus Cyanothece, comprising a group of unicellular nitrogen-fixing Cyanobacteria.</title>
        <authorList>
            <person name="Bandyopadhyay A."/>
            <person name="Elvitigala T."/>
            <person name="Welsh E."/>
            <person name="Stockel J."/>
            <person name="Liberton M."/>
            <person name="Min H."/>
            <person name="Sherman L.A."/>
            <person name="Pakrasi H.B."/>
        </authorList>
    </citation>
    <scope>NUCLEOTIDE SEQUENCE [LARGE SCALE GENOMIC DNA]</scope>
    <source>
        <strain>PCC 8801 / RF-1</strain>
    </source>
</reference>
<organism>
    <name type="scientific">Rippkaea orientalis (strain PCC 8801 / RF-1)</name>
    <name type="common">Cyanothece sp. (strain PCC 8801)</name>
    <dbReference type="NCBI Taxonomy" id="41431"/>
    <lineage>
        <taxon>Bacteria</taxon>
        <taxon>Bacillati</taxon>
        <taxon>Cyanobacteriota</taxon>
        <taxon>Cyanophyceae</taxon>
        <taxon>Oscillatoriophycideae</taxon>
        <taxon>Chroococcales</taxon>
        <taxon>Aphanothecaceae</taxon>
        <taxon>Rippkaea</taxon>
        <taxon>Rippkaea orientalis</taxon>
    </lineage>
</organism>
<feature type="chain" id="PRO_1000195133" description="Holliday junction branch migration complex subunit RuvA">
    <location>
        <begin position="1"/>
        <end position="210"/>
    </location>
</feature>
<feature type="region of interest" description="Domain I" evidence="1">
    <location>
        <begin position="1"/>
        <end position="70"/>
    </location>
</feature>
<feature type="region of interest" description="Domain II" evidence="1">
    <location>
        <begin position="71"/>
        <end position="149"/>
    </location>
</feature>
<feature type="region of interest" description="Flexible linker" evidence="1">
    <location>
        <begin position="150"/>
        <end position="160"/>
    </location>
</feature>
<feature type="region of interest" description="Domain III" evidence="1">
    <location>
        <begin position="160"/>
        <end position="210"/>
    </location>
</feature>
<proteinExistence type="inferred from homology"/>
<keyword id="KW-0963">Cytoplasm</keyword>
<keyword id="KW-0227">DNA damage</keyword>
<keyword id="KW-0233">DNA recombination</keyword>
<keyword id="KW-0234">DNA repair</keyword>
<keyword id="KW-0238">DNA-binding</keyword>
<keyword id="KW-1185">Reference proteome</keyword>
<comment type="function">
    <text evidence="1">The RuvA-RuvB-RuvC complex processes Holliday junction (HJ) DNA during genetic recombination and DNA repair, while the RuvA-RuvB complex plays an important role in the rescue of blocked DNA replication forks via replication fork reversal (RFR). RuvA specifically binds to HJ cruciform DNA, conferring on it an open structure. The RuvB hexamer acts as an ATP-dependent pump, pulling dsDNA into and through the RuvAB complex. HJ branch migration allows RuvC to scan DNA until it finds its consensus sequence, where it cleaves and resolves the cruciform DNA.</text>
</comment>
<comment type="subunit">
    <text evidence="1">Homotetramer. Forms an RuvA(8)-RuvB(12)-Holliday junction (HJ) complex. HJ DNA is sandwiched between 2 RuvA tetramers; dsDNA enters through RuvA and exits via RuvB. An RuvB hexamer assembles on each DNA strand where it exits the tetramer. Each RuvB hexamer is contacted by two RuvA subunits (via domain III) on 2 adjacent RuvB subunits; this complex drives branch migration. In the full resolvosome a probable DNA-RuvA(4)-RuvB(12)-RuvC(2) complex forms which resolves the HJ.</text>
</comment>
<comment type="subcellular location">
    <subcellularLocation>
        <location evidence="1">Cytoplasm</location>
    </subcellularLocation>
</comment>
<comment type="domain">
    <text evidence="1">Has three domains with a flexible linker between the domains II and III and assumes an 'L' shape. Domain III is highly mobile and contacts RuvB.</text>
</comment>
<comment type="similarity">
    <text evidence="1">Belongs to the RuvA family.</text>
</comment>
<protein>
    <recommendedName>
        <fullName evidence="1">Holliday junction branch migration complex subunit RuvA</fullName>
    </recommendedName>
</protein>
<dbReference type="EMBL" id="CP001287">
    <property type="protein sequence ID" value="ACK64127.1"/>
    <property type="molecule type" value="Genomic_DNA"/>
</dbReference>
<dbReference type="RefSeq" id="WP_012593404.1">
    <property type="nucleotide sequence ID" value="NC_011726.1"/>
</dbReference>
<dbReference type="SMR" id="B7JZG7"/>
<dbReference type="STRING" id="41431.PCC8801_0020"/>
<dbReference type="KEGG" id="cyp:PCC8801_0020"/>
<dbReference type="eggNOG" id="COG0632">
    <property type="taxonomic scope" value="Bacteria"/>
</dbReference>
<dbReference type="HOGENOM" id="CLU_087936_0_0_3"/>
<dbReference type="OrthoDB" id="5293449at2"/>
<dbReference type="Proteomes" id="UP000008204">
    <property type="component" value="Chromosome"/>
</dbReference>
<dbReference type="GO" id="GO:0005737">
    <property type="term" value="C:cytoplasm"/>
    <property type="evidence" value="ECO:0007669"/>
    <property type="project" value="UniProtKB-SubCell"/>
</dbReference>
<dbReference type="GO" id="GO:0009379">
    <property type="term" value="C:Holliday junction helicase complex"/>
    <property type="evidence" value="ECO:0007669"/>
    <property type="project" value="InterPro"/>
</dbReference>
<dbReference type="GO" id="GO:0048476">
    <property type="term" value="C:Holliday junction resolvase complex"/>
    <property type="evidence" value="ECO:0007669"/>
    <property type="project" value="UniProtKB-UniRule"/>
</dbReference>
<dbReference type="GO" id="GO:0005524">
    <property type="term" value="F:ATP binding"/>
    <property type="evidence" value="ECO:0007669"/>
    <property type="project" value="InterPro"/>
</dbReference>
<dbReference type="GO" id="GO:0000400">
    <property type="term" value="F:four-way junction DNA binding"/>
    <property type="evidence" value="ECO:0007669"/>
    <property type="project" value="UniProtKB-UniRule"/>
</dbReference>
<dbReference type="GO" id="GO:0009378">
    <property type="term" value="F:four-way junction helicase activity"/>
    <property type="evidence" value="ECO:0007669"/>
    <property type="project" value="InterPro"/>
</dbReference>
<dbReference type="GO" id="GO:0006310">
    <property type="term" value="P:DNA recombination"/>
    <property type="evidence" value="ECO:0007669"/>
    <property type="project" value="UniProtKB-UniRule"/>
</dbReference>
<dbReference type="GO" id="GO:0006281">
    <property type="term" value="P:DNA repair"/>
    <property type="evidence" value="ECO:0007669"/>
    <property type="project" value="UniProtKB-UniRule"/>
</dbReference>
<dbReference type="CDD" id="cd14332">
    <property type="entry name" value="UBA_RuvA_C"/>
    <property type="match status" value="1"/>
</dbReference>
<dbReference type="Gene3D" id="1.10.150.20">
    <property type="entry name" value="5' to 3' exonuclease, C-terminal subdomain"/>
    <property type="match status" value="1"/>
</dbReference>
<dbReference type="Gene3D" id="1.10.8.10">
    <property type="entry name" value="DNA helicase RuvA subunit, C-terminal domain"/>
    <property type="match status" value="1"/>
</dbReference>
<dbReference type="Gene3D" id="2.40.50.140">
    <property type="entry name" value="Nucleic acid-binding proteins"/>
    <property type="match status" value="1"/>
</dbReference>
<dbReference type="HAMAP" id="MF_00031">
    <property type="entry name" value="DNA_HJ_migration_RuvA"/>
    <property type="match status" value="1"/>
</dbReference>
<dbReference type="InterPro" id="IPR013849">
    <property type="entry name" value="DNA_helicase_Holl-junc_RuvA_I"/>
</dbReference>
<dbReference type="InterPro" id="IPR003583">
    <property type="entry name" value="Hlx-hairpin-Hlx_DNA-bd_motif"/>
</dbReference>
<dbReference type="InterPro" id="IPR012340">
    <property type="entry name" value="NA-bd_OB-fold"/>
</dbReference>
<dbReference type="InterPro" id="IPR000085">
    <property type="entry name" value="RuvA"/>
</dbReference>
<dbReference type="InterPro" id="IPR010994">
    <property type="entry name" value="RuvA_2-like"/>
</dbReference>
<dbReference type="InterPro" id="IPR011114">
    <property type="entry name" value="RuvA_C"/>
</dbReference>
<dbReference type="InterPro" id="IPR036267">
    <property type="entry name" value="RuvA_C_sf"/>
</dbReference>
<dbReference type="NCBIfam" id="TIGR00084">
    <property type="entry name" value="ruvA"/>
    <property type="match status" value="1"/>
</dbReference>
<dbReference type="Pfam" id="PF14520">
    <property type="entry name" value="HHH_5"/>
    <property type="match status" value="1"/>
</dbReference>
<dbReference type="Pfam" id="PF07499">
    <property type="entry name" value="RuvA_C"/>
    <property type="match status" value="1"/>
</dbReference>
<dbReference type="Pfam" id="PF01330">
    <property type="entry name" value="RuvA_N"/>
    <property type="match status" value="1"/>
</dbReference>
<dbReference type="SMART" id="SM00278">
    <property type="entry name" value="HhH1"/>
    <property type="match status" value="2"/>
</dbReference>
<dbReference type="SUPFAM" id="SSF46929">
    <property type="entry name" value="DNA helicase RuvA subunit, C-terminal domain"/>
    <property type="match status" value="1"/>
</dbReference>
<dbReference type="SUPFAM" id="SSF50249">
    <property type="entry name" value="Nucleic acid-binding proteins"/>
    <property type="match status" value="1"/>
</dbReference>
<dbReference type="SUPFAM" id="SSF47781">
    <property type="entry name" value="RuvA domain 2-like"/>
    <property type="match status" value="1"/>
</dbReference>
<gene>
    <name evidence="1" type="primary">ruvA</name>
    <name type="ordered locus">PCC8801_0020</name>
</gene>
<accession>B7JZG7</accession>
<sequence length="210" mass="23489">MISYLKGNPIETLKNTQNRILLILEVNQVGYEMQIPSRFARELSQNPRETLQVFTHLQVKDEQPILYGFATAAERELFRQLVSVSGIGAQLAIALIDTLGLEELVQAIVNGNIRTLSQTPGVGQKTAERIALELKTKLSQWRKLVGITLPSTSAIPSLEVLEDVEMTLLALGYTNEEINKAISTLSQDNQMLKNTNSEEWIREAIAWLSQ</sequence>
<name>RUVA_RIPO1</name>